<accession>A0LI16</accession>
<name>GLYA_SYNFM</name>
<sequence length="411" mass="44736">MSTLERIDPEIADVICEEEKRQRGKLELIASENFVSEAVREAQGSVLTNKYAEGYPGKRYYGGCEFVDMAERLAQERAKKLFDAEYANVQPHSGSQANMAIFFAVLQPGDTVLGMDLRQGGHLTHGSPVSFSGKLYNVVSYGVRKDTEQIDFDQVARLAREHRPKLIIAGASAYPRIIDFARFGQIAKEIAAYLMVDMAHIAGLVCSGLHPSPVPHADFVTSTTHKTLRGPRGGLILSHSNYTRLLDSQIFPGIQGGPLMHVIAAKAVAFREALQPSFKEYQQRVVADAAALAQELKALGYRLVSGGTDNHLMLVDLTPQGVTGRVAEETLDKAGITVNKNSIPFDQQKPQVTSGIRIGTPALATRGILPHHMKAVAGFMHRGLKSAGDEPALARLRAEVAEFCSAFPLFS</sequence>
<organism>
    <name type="scientific">Syntrophobacter fumaroxidans (strain DSM 10017 / MPOB)</name>
    <dbReference type="NCBI Taxonomy" id="335543"/>
    <lineage>
        <taxon>Bacteria</taxon>
        <taxon>Pseudomonadati</taxon>
        <taxon>Thermodesulfobacteriota</taxon>
        <taxon>Syntrophobacteria</taxon>
        <taxon>Syntrophobacterales</taxon>
        <taxon>Syntrophobacteraceae</taxon>
        <taxon>Syntrophobacter</taxon>
    </lineage>
</organism>
<protein>
    <recommendedName>
        <fullName evidence="1">Serine hydroxymethyltransferase</fullName>
        <shortName evidence="1">SHMT</shortName>
        <shortName evidence="1">Serine methylase</shortName>
        <ecNumber evidence="1">2.1.2.1</ecNumber>
    </recommendedName>
</protein>
<reference key="1">
    <citation type="submission" date="2006-10" db="EMBL/GenBank/DDBJ databases">
        <title>Complete sequence of Syntrophobacter fumaroxidans MPOB.</title>
        <authorList>
            <consortium name="US DOE Joint Genome Institute"/>
            <person name="Copeland A."/>
            <person name="Lucas S."/>
            <person name="Lapidus A."/>
            <person name="Barry K."/>
            <person name="Detter J.C."/>
            <person name="Glavina del Rio T."/>
            <person name="Hammon N."/>
            <person name="Israni S."/>
            <person name="Pitluck S."/>
            <person name="Goltsman E.G."/>
            <person name="Martinez M."/>
            <person name="Schmutz J."/>
            <person name="Larimer F."/>
            <person name="Land M."/>
            <person name="Hauser L."/>
            <person name="Kyrpides N."/>
            <person name="Kim E."/>
            <person name="Boone D.R."/>
            <person name="Brockman F."/>
            <person name="Culley D."/>
            <person name="Ferry J."/>
            <person name="Gunsalus R."/>
            <person name="McInerney M.J."/>
            <person name="Morrison M."/>
            <person name="Plugge C."/>
            <person name="Rohlin L."/>
            <person name="Scholten J."/>
            <person name="Sieber J."/>
            <person name="Stams A.J.M."/>
            <person name="Worm P."/>
            <person name="Henstra A.M."/>
            <person name="Richardson P."/>
        </authorList>
    </citation>
    <scope>NUCLEOTIDE SEQUENCE [LARGE SCALE GENOMIC DNA]</scope>
    <source>
        <strain>DSM 10017 / MPOB</strain>
    </source>
</reference>
<dbReference type="EC" id="2.1.2.1" evidence="1"/>
<dbReference type="EMBL" id="CP000478">
    <property type="protein sequence ID" value="ABK17068.1"/>
    <property type="molecule type" value="Genomic_DNA"/>
</dbReference>
<dbReference type="RefSeq" id="WP_011698239.1">
    <property type="nucleotide sequence ID" value="NC_008554.1"/>
</dbReference>
<dbReference type="SMR" id="A0LI16"/>
<dbReference type="FunCoup" id="A0LI16">
    <property type="interactions" value="554"/>
</dbReference>
<dbReference type="STRING" id="335543.Sfum_1377"/>
<dbReference type="KEGG" id="sfu:Sfum_1377"/>
<dbReference type="eggNOG" id="COG0112">
    <property type="taxonomic scope" value="Bacteria"/>
</dbReference>
<dbReference type="HOGENOM" id="CLU_022477_2_1_7"/>
<dbReference type="InParanoid" id="A0LI16"/>
<dbReference type="OrthoDB" id="9803846at2"/>
<dbReference type="UniPathway" id="UPA00193"/>
<dbReference type="UniPathway" id="UPA00288">
    <property type="reaction ID" value="UER01023"/>
</dbReference>
<dbReference type="Proteomes" id="UP000001784">
    <property type="component" value="Chromosome"/>
</dbReference>
<dbReference type="GO" id="GO:0005829">
    <property type="term" value="C:cytosol"/>
    <property type="evidence" value="ECO:0007669"/>
    <property type="project" value="TreeGrafter"/>
</dbReference>
<dbReference type="GO" id="GO:0004372">
    <property type="term" value="F:glycine hydroxymethyltransferase activity"/>
    <property type="evidence" value="ECO:0007669"/>
    <property type="project" value="UniProtKB-UniRule"/>
</dbReference>
<dbReference type="GO" id="GO:0030170">
    <property type="term" value="F:pyridoxal phosphate binding"/>
    <property type="evidence" value="ECO:0007669"/>
    <property type="project" value="UniProtKB-UniRule"/>
</dbReference>
<dbReference type="GO" id="GO:0019264">
    <property type="term" value="P:glycine biosynthetic process from serine"/>
    <property type="evidence" value="ECO:0007669"/>
    <property type="project" value="UniProtKB-UniRule"/>
</dbReference>
<dbReference type="GO" id="GO:0035999">
    <property type="term" value="P:tetrahydrofolate interconversion"/>
    <property type="evidence" value="ECO:0007669"/>
    <property type="project" value="UniProtKB-UniRule"/>
</dbReference>
<dbReference type="CDD" id="cd00378">
    <property type="entry name" value="SHMT"/>
    <property type="match status" value="1"/>
</dbReference>
<dbReference type="FunFam" id="3.40.640.10:FF:000001">
    <property type="entry name" value="Serine hydroxymethyltransferase"/>
    <property type="match status" value="1"/>
</dbReference>
<dbReference type="Gene3D" id="3.90.1150.10">
    <property type="entry name" value="Aspartate Aminotransferase, domain 1"/>
    <property type="match status" value="1"/>
</dbReference>
<dbReference type="Gene3D" id="3.40.640.10">
    <property type="entry name" value="Type I PLP-dependent aspartate aminotransferase-like (Major domain)"/>
    <property type="match status" value="1"/>
</dbReference>
<dbReference type="HAMAP" id="MF_00051">
    <property type="entry name" value="SHMT"/>
    <property type="match status" value="1"/>
</dbReference>
<dbReference type="InterPro" id="IPR015424">
    <property type="entry name" value="PyrdxlP-dep_Trfase"/>
</dbReference>
<dbReference type="InterPro" id="IPR015421">
    <property type="entry name" value="PyrdxlP-dep_Trfase_major"/>
</dbReference>
<dbReference type="InterPro" id="IPR015422">
    <property type="entry name" value="PyrdxlP-dep_Trfase_small"/>
</dbReference>
<dbReference type="InterPro" id="IPR001085">
    <property type="entry name" value="Ser_HO-MeTrfase"/>
</dbReference>
<dbReference type="InterPro" id="IPR049943">
    <property type="entry name" value="Ser_HO-MeTrfase-like"/>
</dbReference>
<dbReference type="InterPro" id="IPR019798">
    <property type="entry name" value="Ser_HO-MeTrfase_PLP_BS"/>
</dbReference>
<dbReference type="InterPro" id="IPR039429">
    <property type="entry name" value="SHMT-like_dom"/>
</dbReference>
<dbReference type="NCBIfam" id="NF000586">
    <property type="entry name" value="PRK00011.1"/>
    <property type="match status" value="1"/>
</dbReference>
<dbReference type="PANTHER" id="PTHR11680">
    <property type="entry name" value="SERINE HYDROXYMETHYLTRANSFERASE"/>
    <property type="match status" value="1"/>
</dbReference>
<dbReference type="PANTHER" id="PTHR11680:SF35">
    <property type="entry name" value="SERINE HYDROXYMETHYLTRANSFERASE 1"/>
    <property type="match status" value="1"/>
</dbReference>
<dbReference type="Pfam" id="PF00464">
    <property type="entry name" value="SHMT"/>
    <property type="match status" value="1"/>
</dbReference>
<dbReference type="PIRSF" id="PIRSF000412">
    <property type="entry name" value="SHMT"/>
    <property type="match status" value="1"/>
</dbReference>
<dbReference type="SUPFAM" id="SSF53383">
    <property type="entry name" value="PLP-dependent transferases"/>
    <property type="match status" value="1"/>
</dbReference>
<dbReference type="PROSITE" id="PS00096">
    <property type="entry name" value="SHMT"/>
    <property type="match status" value="1"/>
</dbReference>
<keyword id="KW-0028">Amino-acid biosynthesis</keyword>
<keyword id="KW-0963">Cytoplasm</keyword>
<keyword id="KW-0554">One-carbon metabolism</keyword>
<keyword id="KW-0663">Pyridoxal phosphate</keyword>
<keyword id="KW-1185">Reference proteome</keyword>
<keyword id="KW-0808">Transferase</keyword>
<comment type="function">
    <text evidence="1">Catalyzes the reversible interconversion of serine and glycine with tetrahydrofolate (THF) serving as the one-carbon carrier. This reaction serves as the major source of one-carbon groups required for the biosynthesis of purines, thymidylate, methionine, and other important biomolecules. Also exhibits THF-independent aldolase activity toward beta-hydroxyamino acids, producing glycine and aldehydes, via a retro-aldol mechanism.</text>
</comment>
<comment type="catalytic activity">
    <reaction evidence="1">
        <text>(6R)-5,10-methylene-5,6,7,8-tetrahydrofolate + glycine + H2O = (6S)-5,6,7,8-tetrahydrofolate + L-serine</text>
        <dbReference type="Rhea" id="RHEA:15481"/>
        <dbReference type="ChEBI" id="CHEBI:15377"/>
        <dbReference type="ChEBI" id="CHEBI:15636"/>
        <dbReference type="ChEBI" id="CHEBI:33384"/>
        <dbReference type="ChEBI" id="CHEBI:57305"/>
        <dbReference type="ChEBI" id="CHEBI:57453"/>
        <dbReference type="EC" id="2.1.2.1"/>
    </reaction>
</comment>
<comment type="cofactor">
    <cofactor evidence="1">
        <name>pyridoxal 5'-phosphate</name>
        <dbReference type="ChEBI" id="CHEBI:597326"/>
    </cofactor>
</comment>
<comment type="pathway">
    <text evidence="1">One-carbon metabolism; tetrahydrofolate interconversion.</text>
</comment>
<comment type="pathway">
    <text evidence="1">Amino-acid biosynthesis; glycine biosynthesis; glycine from L-serine: step 1/1.</text>
</comment>
<comment type="subunit">
    <text evidence="1">Homodimer.</text>
</comment>
<comment type="subcellular location">
    <subcellularLocation>
        <location evidence="1">Cytoplasm</location>
    </subcellularLocation>
</comment>
<comment type="similarity">
    <text evidence="1">Belongs to the SHMT family.</text>
</comment>
<proteinExistence type="inferred from homology"/>
<gene>
    <name evidence="1" type="primary">glyA</name>
    <name type="ordered locus">Sfum_1377</name>
</gene>
<feature type="chain" id="PRO_1000006337" description="Serine hydroxymethyltransferase">
    <location>
        <begin position="1"/>
        <end position="411"/>
    </location>
</feature>
<feature type="binding site" evidence="1">
    <location>
        <position position="117"/>
    </location>
    <ligand>
        <name>(6S)-5,6,7,8-tetrahydrofolate</name>
        <dbReference type="ChEBI" id="CHEBI:57453"/>
    </ligand>
</feature>
<feature type="binding site" evidence="1">
    <location>
        <begin position="121"/>
        <end position="123"/>
    </location>
    <ligand>
        <name>(6S)-5,6,7,8-tetrahydrofolate</name>
        <dbReference type="ChEBI" id="CHEBI:57453"/>
    </ligand>
</feature>
<feature type="site" description="Plays an important role in substrate specificity" evidence="1">
    <location>
        <position position="225"/>
    </location>
</feature>
<feature type="modified residue" description="N6-(pyridoxal phosphate)lysine" evidence="1">
    <location>
        <position position="226"/>
    </location>
</feature>
<evidence type="ECO:0000255" key="1">
    <source>
        <dbReference type="HAMAP-Rule" id="MF_00051"/>
    </source>
</evidence>